<dbReference type="EC" id="4.6.1.2" evidence="7 8"/>
<dbReference type="EMBL" id="L37203">
    <property type="protein sequence ID" value="AAC42057.1"/>
    <property type="molecule type" value="mRNA"/>
</dbReference>
<dbReference type="EMBL" id="AABR07004868">
    <property type="status" value="NOT_ANNOTATED_CDS"/>
    <property type="molecule type" value="Genomic_DNA"/>
</dbReference>
<dbReference type="PIR" id="I59370">
    <property type="entry name" value="I59370"/>
</dbReference>
<dbReference type="RefSeq" id="NP_570093.1">
    <property type="nucleotide sequence ID" value="NM_130737.4"/>
</dbReference>
<dbReference type="SMR" id="P51839"/>
<dbReference type="FunCoup" id="P51839">
    <property type="interactions" value="1005"/>
</dbReference>
<dbReference type="STRING" id="10116.ENSRNOP00000020513"/>
<dbReference type="CarbonylDB" id="P51839"/>
<dbReference type="GlyCosmos" id="P51839">
    <property type="glycosylation" value="2 sites, No reported glycans"/>
</dbReference>
<dbReference type="GlyGen" id="P51839">
    <property type="glycosylation" value="2 sites"/>
</dbReference>
<dbReference type="PhosphoSitePlus" id="P51839"/>
<dbReference type="PaxDb" id="10116-ENSRNOP00000020513"/>
<dbReference type="GeneID" id="113911"/>
<dbReference type="KEGG" id="rno:113911"/>
<dbReference type="UCSC" id="RGD:69322">
    <property type="organism name" value="rat"/>
</dbReference>
<dbReference type="AGR" id="RGD:69322"/>
<dbReference type="CTD" id="14919"/>
<dbReference type="RGD" id="69322">
    <property type="gene designation" value="Gucy2d"/>
</dbReference>
<dbReference type="VEuPathDB" id="HostDB:ENSRNOG00000015058"/>
<dbReference type="eggNOG" id="KOG1023">
    <property type="taxonomic scope" value="Eukaryota"/>
</dbReference>
<dbReference type="HOGENOM" id="CLU_001072_1_0_1"/>
<dbReference type="InParanoid" id="P51839"/>
<dbReference type="OrthoDB" id="1890790at2759"/>
<dbReference type="PhylomeDB" id="P51839"/>
<dbReference type="TreeFam" id="TF106338"/>
<dbReference type="PRO" id="PR:P51839"/>
<dbReference type="Proteomes" id="UP000002494">
    <property type="component" value="Chromosome 1"/>
</dbReference>
<dbReference type="GO" id="GO:0060170">
    <property type="term" value="C:ciliary membrane"/>
    <property type="evidence" value="ECO:0007669"/>
    <property type="project" value="UniProtKB-SubCell"/>
</dbReference>
<dbReference type="GO" id="GO:0097730">
    <property type="term" value="C:non-motile cilium"/>
    <property type="evidence" value="ECO:0000314"/>
    <property type="project" value="UniProtKB"/>
</dbReference>
<dbReference type="GO" id="GO:0005886">
    <property type="term" value="C:plasma membrane"/>
    <property type="evidence" value="ECO:0000314"/>
    <property type="project" value="UniProtKB"/>
</dbReference>
<dbReference type="GO" id="GO:0005524">
    <property type="term" value="F:ATP binding"/>
    <property type="evidence" value="ECO:0007669"/>
    <property type="project" value="InterPro"/>
</dbReference>
<dbReference type="GO" id="GO:0005525">
    <property type="term" value="F:GTP binding"/>
    <property type="evidence" value="ECO:0007669"/>
    <property type="project" value="UniProtKB-KW"/>
</dbReference>
<dbReference type="GO" id="GO:0004383">
    <property type="term" value="F:guanylate cyclase activity"/>
    <property type="evidence" value="ECO:0000314"/>
    <property type="project" value="UniProtKB"/>
</dbReference>
<dbReference type="GO" id="GO:0016941">
    <property type="term" value="F:natriuretic peptide receptor activity"/>
    <property type="evidence" value="ECO:0000314"/>
    <property type="project" value="UniProtKB"/>
</dbReference>
<dbReference type="GO" id="GO:0005549">
    <property type="term" value="F:odorant binding"/>
    <property type="evidence" value="ECO:0000266"/>
    <property type="project" value="RGD"/>
</dbReference>
<dbReference type="GO" id="GO:0004984">
    <property type="term" value="F:olfactory receptor activity"/>
    <property type="evidence" value="ECO:0000266"/>
    <property type="project" value="RGD"/>
</dbReference>
<dbReference type="GO" id="GO:0001653">
    <property type="term" value="F:peptide receptor activity"/>
    <property type="evidence" value="ECO:0000318"/>
    <property type="project" value="GO_Central"/>
</dbReference>
<dbReference type="GO" id="GO:0004672">
    <property type="term" value="F:protein kinase activity"/>
    <property type="evidence" value="ECO:0007669"/>
    <property type="project" value="InterPro"/>
</dbReference>
<dbReference type="GO" id="GO:0006182">
    <property type="term" value="P:cGMP biosynthetic process"/>
    <property type="evidence" value="ECO:0000314"/>
    <property type="project" value="UniProtKB"/>
</dbReference>
<dbReference type="GO" id="GO:0003031">
    <property type="term" value="P:detection of carbon dioxide"/>
    <property type="evidence" value="ECO:0000266"/>
    <property type="project" value="RGD"/>
</dbReference>
<dbReference type="GO" id="GO:0050911">
    <property type="term" value="P:detection of chemical stimulus involved in sensory perception of smell"/>
    <property type="evidence" value="ECO:0000266"/>
    <property type="project" value="RGD"/>
</dbReference>
<dbReference type="GO" id="GO:0035556">
    <property type="term" value="P:intracellular signal transduction"/>
    <property type="evidence" value="ECO:0007669"/>
    <property type="project" value="InterPro"/>
</dbReference>
<dbReference type="GO" id="GO:0042048">
    <property type="term" value="P:olfactory behavior"/>
    <property type="evidence" value="ECO:0000266"/>
    <property type="project" value="RGD"/>
</dbReference>
<dbReference type="GO" id="GO:0008355">
    <property type="term" value="P:olfactory learning"/>
    <property type="evidence" value="ECO:0000266"/>
    <property type="project" value="RGD"/>
</dbReference>
<dbReference type="GO" id="GO:0010753">
    <property type="term" value="P:positive regulation of cGMP-mediated signaling"/>
    <property type="evidence" value="ECO:0000266"/>
    <property type="project" value="RGD"/>
</dbReference>
<dbReference type="GO" id="GO:0007168">
    <property type="term" value="P:receptor guanylyl cyclase signaling pathway"/>
    <property type="evidence" value="ECO:0000314"/>
    <property type="project" value="UniProtKB"/>
</dbReference>
<dbReference type="GO" id="GO:0007608">
    <property type="term" value="P:sensory perception of smell"/>
    <property type="evidence" value="ECO:0000266"/>
    <property type="project" value="RGD"/>
</dbReference>
<dbReference type="CDD" id="cd07302">
    <property type="entry name" value="CHD"/>
    <property type="match status" value="1"/>
</dbReference>
<dbReference type="CDD" id="cd06371">
    <property type="entry name" value="PBP1_sensory_GC_DEF-like"/>
    <property type="match status" value="1"/>
</dbReference>
<dbReference type="CDD" id="cd14043">
    <property type="entry name" value="PK_GC-2D"/>
    <property type="match status" value="1"/>
</dbReference>
<dbReference type="FunFam" id="1.10.510.10:FF:000404">
    <property type="entry name" value="Guanylate cyclase"/>
    <property type="match status" value="1"/>
</dbReference>
<dbReference type="FunFam" id="3.30.70.1230:FF:000013">
    <property type="entry name" value="Guanylate cyclase"/>
    <property type="match status" value="1"/>
</dbReference>
<dbReference type="FunFam" id="3.40.50.2300:FF:000114">
    <property type="entry name" value="Guanylate cyclase"/>
    <property type="match status" value="1"/>
</dbReference>
<dbReference type="FunFam" id="3.40.50.2300:FF:000333">
    <property type="entry name" value="Guanylate cyclase"/>
    <property type="match status" value="1"/>
</dbReference>
<dbReference type="Gene3D" id="3.40.50.2300">
    <property type="match status" value="2"/>
</dbReference>
<dbReference type="Gene3D" id="6.10.250.780">
    <property type="match status" value="1"/>
</dbReference>
<dbReference type="Gene3D" id="3.30.70.1230">
    <property type="entry name" value="Nucleotide cyclase"/>
    <property type="match status" value="1"/>
</dbReference>
<dbReference type="Gene3D" id="1.10.510.10">
    <property type="entry name" value="Transferase(Phosphotransferase) domain 1"/>
    <property type="match status" value="1"/>
</dbReference>
<dbReference type="InterPro" id="IPR001054">
    <property type="entry name" value="A/G_cyclase"/>
</dbReference>
<dbReference type="InterPro" id="IPR018297">
    <property type="entry name" value="A/G_cyclase_CS"/>
</dbReference>
<dbReference type="InterPro" id="IPR001828">
    <property type="entry name" value="ANF_lig-bd_rcpt"/>
</dbReference>
<dbReference type="InterPro" id="IPR050401">
    <property type="entry name" value="Cyclic_nucleotide_synthase"/>
</dbReference>
<dbReference type="InterPro" id="IPR011009">
    <property type="entry name" value="Kinase-like_dom_sf"/>
</dbReference>
<dbReference type="InterPro" id="IPR029787">
    <property type="entry name" value="Nucleotide_cyclase"/>
</dbReference>
<dbReference type="InterPro" id="IPR028082">
    <property type="entry name" value="Peripla_BP_I"/>
</dbReference>
<dbReference type="InterPro" id="IPR000719">
    <property type="entry name" value="Prot_kinase_dom"/>
</dbReference>
<dbReference type="InterPro" id="IPR001245">
    <property type="entry name" value="Ser-Thr/Tyr_kinase_cat_dom"/>
</dbReference>
<dbReference type="PANTHER" id="PTHR11920:SF477">
    <property type="entry name" value="GUANYLATE CYCLASE D"/>
    <property type="match status" value="1"/>
</dbReference>
<dbReference type="PANTHER" id="PTHR11920">
    <property type="entry name" value="GUANYLYL CYCLASE"/>
    <property type="match status" value="1"/>
</dbReference>
<dbReference type="Pfam" id="PF01094">
    <property type="entry name" value="ANF_receptor"/>
    <property type="match status" value="1"/>
</dbReference>
<dbReference type="Pfam" id="PF00211">
    <property type="entry name" value="Guanylate_cyc"/>
    <property type="match status" value="1"/>
</dbReference>
<dbReference type="Pfam" id="PF07714">
    <property type="entry name" value="PK_Tyr_Ser-Thr"/>
    <property type="match status" value="1"/>
</dbReference>
<dbReference type="SMART" id="SM00044">
    <property type="entry name" value="CYCc"/>
    <property type="match status" value="1"/>
</dbReference>
<dbReference type="SUPFAM" id="SSF55073">
    <property type="entry name" value="Nucleotide cyclase"/>
    <property type="match status" value="1"/>
</dbReference>
<dbReference type="SUPFAM" id="SSF53822">
    <property type="entry name" value="Periplasmic binding protein-like I"/>
    <property type="match status" value="1"/>
</dbReference>
<dbReference type="SUPFAM" id="SSF56112">
    <property type="entry name" value="Protein kinase-like (PK-like)"/>
    <property type="match status" value="1"/>
</dbReference>
<dbReference type="PROSITE" id="PS00452">
    <property type="entry name" value="GUANYLATE_CYCLASE_1"/>
    <property type="match status" value="1"/>
</dbReference>
<dbReference type="PROSITE" id="PS50125">
    <property type="entry name" value="GUANYLATE_CYCLASE_2"/>
    <property type="match status" value="1"/>
</dbReference>
<dbReference type="PROSITE" id="PS50011">
    <property type="entry name" value="PROTEIN_KINASE_DOM"/>
    <property type="match status" value="1"/>
</dbReference>
<keyword id="KW-1003">Cell membrane</keyword>
<keyword id="KW-0966">Cell projection</keyword>
<keyword id="KW-0141">cGMP biosynthesis</keyword>
<keyword id="KW-1015">Disulfide bond</keyword>
<keyword id="KW-0325">Glycoprotein</keyword>
<keyword id="KW-0342">GTP-binding</keyword>
<keyword id="KW-0456">Lyase</keyword>
<keyword id="KW-0472">Membrane</keyword>
<keyword id="KW-0547">Nucleotide-binding</keyword>
<keyword id="KW-0552">Olfaction</keyword>
<keyword id="KW-1185">Reference proteome</keyword>
<keyword id="KW-0716">Sensory transduction</keyword>
<keyword id="KW-0732">Signal</keyword>
<keyword id="KW-0812">Transmembrane</keyword>
<keyword id="KW-1133">Transmembrane helix</keyword>
<protein>
    <recommendedName>
        <fullName>Guanylate cyclase 2D</fullName>
        <ecNumber evidence="7 8">4.6.1.2</ecNumber>
    </recommendedName>
    <alternativeName>
        <fullName>Guanylate cyclase, olfactory</fullName>
    </alternativeName>
    <alternativeName>
        <fullName evidence="10">ONE-GC</fullName>
    </alternativeName>
    <alternativeName>
        <fullName evidence="11">Olfactory guanylyl cyclase GC-D</fullName>
        <shortName evidence="11">GC-D</shortName>
    </alternativeName>
</protein>
<proteinExistence type="evidence at protein level"/>
<evidence type="ECO:0000250" key="1"/>
<evidence type="ECO:0000250" key="2">
    <source>
        <dbReference type="UniProtKB" id="A0A0U1RPR8"/>
    </source>
</evidence>
<evidence type="ECO:0000255" key="3"/>
<evidence type="ECO:0000255" key="4">
    <source>
        <dbReference type="PROSITE-ProRule" id="PRU00099"/>
    </source>
</evidence>
<evidence type="ECO:0000255" key="5">
    <source>
        <dbReference type="PROSITE-ProRule" id="PRU00159"/>
    </source>
</evidence>
<evidence type="ECO:0000256" key="6">
    <source>
        <dbReference type="SAM" id="MobiDB-lite"/>
    </source>
</evidence>
<evidence type="ECO:0000269" key="7">
    <source>
    </source>
</evidence>
<evidence type="ECO:0000269" key="8">
    <source>
    </source>
</evidence>
<evidence type="ECO:0000269" key="9">
    <source>
    </source>
</evidence>
<evidence type="ECO:0000303" key="10">
    <source>
    </source>
</evidence>
<evidence type="ECO:0000303" key="11">
    <source>
    </source>
</evidence>
<evidence type="ECO:0000305" key="12"/>
<evidence type="ECO:0000312" key="13">
    <source>
        <dbReference type="RGD" id="69322"/>
    </source>
</evidence>
<gene>
    <name type="primary">Gucy2d</name>
    <name evidence="13" type="synonym">Gucy2e</name>
</gene>
<reference key="1">
    <citation type="journal article" date="1995" name="Proc. Natl. Acad. Sci. U.S.A.">
        <title>A receptor guanylyl cyclase expressed specifically in olfactory sensory neurons.</title>
        <authorList>
            <person name="Fuelle H.-J."/>
            <person name="Vassar R."/>
            <person name="Foster D.C."/>
            <person name="Yang R.-B."/>
            <person name="Axel R."/>
            <person name="Garbers D.L."/>
        </authorList>
    </citation>
    <scope>NUCLEOTIDE SEQUENCE [MRNA]</scope>
    <scope>TISSUE SPECIFICITY</scope>
    <source>
        <strain>Sprague-Dawley</strain>
        <tissue>Olfactory neuron</tissue>
    </source>
</reference>
<reference key="2">
    <citation type="journal article" date="2004" name="Nature">
        <title>Genome sequence of the Brown Norway rat yields insights into mammalian evolution.</title>
        <authorList>
            <person name="Gibbs R.A."/>
            <person name="Weinstock G.M."/>
            <person name="Metzker M.L."/>
            <person name="Muzny D.M."/>
            <person name="Sodergren E.J."/>
            <person name="Scherer S."/>
            <person name="Scott G."/>
            <person name="Steffen D."/>
            <person name="Worley K.C."/>
            <person name="Burch P.E."/>
            <person name="Okwuonu G."/>
            <person name="Hines S."/>
            <person name="Lewis L."/>
            <person name="Deramo C."/>
            <person name="Delgado O."/>
            <person name="Dugan-Rocha S."/>
            <person name="Miner G."/>
            <person name="Morgan M."/>
            <person name="Hawes A."/>
            <person name="Gill R."/>
            <person name="Holt R.A."/>
            <person name="Adams M.D."/>
            <person name="Amanatides P.G."/>
            <person name="Baden-Tillson H."/>
            <person name="Barnstead M."/>
            <person name="Chin S."/>
            <person name="Evans C.A."/>
            <person name="Ferriera S."/>
            <person name="Fosler C."/>
            <person name="Glodek A."/>
            <person name="Gu Z."/>
            <person name="Jennings D."/>
            <person name="Kraft C.L."/>
            <person name="Nguyen T."/>
            <person name="Pfannkoch C.M."/>
            <person name="Sitter C."/>
            <person name="Sutton G.G."/>
            <person name="Venter J.C."/>
            <person name="Woodage T."/>
            <person name="Smith D."/>
            <person name="Lee H.-M."/>
            <person name="Gustafson E."/>
            <person name="Cahill P."/>
            <person name="Kana A."/>
            <person name="Doucette-Stamm L."/>
            <person name="Weinstock K."/>
            <person name="Fechtel K."/>
            <person name="Weiss R.B."/>
            <person name="Dunn D.M."/>
            <person name="Green E.D."/>
            <person name="Blakesley R.W."/>
            <person name="Bouffard G.G."/>
            <person name="De Jong P.J."/>
            <person name="Osoegawa K."/>
            <person name="Zhu B."/>
            <person name="Marra M."/>
            <person name="Schein J."/>
            <person name="Bosdet I."/>
            <person name="Fjell C."/>
            <person name="Jones S."/>
            <person name="Krzywinski M."/>
            <person name="Mathewson C."/>
            <person name="Siddiqui A."/>
            <person name="Wye N."/>
            <person name="McPherson J."/>
            <person name="Zhao S."/>
            <person name="Fraser C.M."/>
            <person name="Shetty J."/>
            <person name="Shatsman S."/>
            <person name="Geer K."/>
            <person name="Chen Y."/>
            <person name="Abramzon S."/>
            <person name="Nierman W.C."/>
            <person name="Havlak P.H."/>
            <person name="Chen R."/>
            <person name="Durbin K.J."/>
            <person name="Egan A."/>
            <person name="Ren Y."/>
            <person name="Song X.-Z."/>
            <person name="Li B."/>
            <person name="Liu Y."/>
            <person name="Qin X."/>
            <person name="Cawley S."/>
            <person name="Cooney A.J."/>
            <person name="D'Souza L.M."/>
            <person name="Martin K."/>
            <person name="Wu J.Q."/>
            <person name="Gonzalez-Garay M.L."/>
            <person name="Jackson A.R."/>
            <person name="Kalafus K.J."/>
            <person name="McLeod M.P."/>
            <person name="Milosavljevic A."/>
            <person name="Virk D."/>
            <person name="Volkov A."/>
            <person name="Wheeler D.A."/>
            <person name="Zhang Z."/>
            <person name="Bailey J.A."/>
            <person name="Eichler E.E."/>
            <person name="Tuzun E."/>
            <person name="Birney E."/>
            <person name="Mongin E."/>
            <person name="Ureta-Vidal A."/>
            <person name="Woodwark C."/>
            <person name="Zdobnov E."/>
            <person name="Bork P."/>
            <person name="Suyama M."/>
            <person name="Torrents D."/>
            <person name="Alexandersson M."/>
            <person name="Trask B.J."/>
            <person name="Young J.M."/>
            <person name="Huang H."/>
            <person name="Wang H."/>
            <person name="Xing H."/>
            <person name="Daniels S."/>
            <person name="Gietzen D."/>
            <person name="Schmidt J."/>
            <person name="Stevens K."/>
            <person name="Vitt U."/>
            <person name="Wingrove J."/>
            <person name="Camara F."/>
            <person name="Mar Alba M."/>
            <person name="Abril J.F."/>
            <person name="Guigo R."/>
            <person name="Smit A."/>
            <person name="Dubchak I."/>
            <person name="Rubin E.M."/>
            <person name="Couronne O."/>
            <person name="Poliakov A."/>
            <person name="Huebner N."/>
            <person name="Ganten D."/>
            <person name="Goesele C."/>
            <person name="Hummel O."/>
            <person name="Kreitler T."/>
            <person name="Lee Y.-A."/>
            <person name="Monti J."/>
            <person name="Schulz H."/>
            <person name="Zimdahl H."/>
            <person name="Himmelbauer H."/>
            <person name="Lehrach H."/>
            <person name="Jacob H.J."/>
            <person name="Bromberg S."/>
            <person name="Gullings-Handley J."/>
            <person name="Jensen-Seaman M.I."/>
            <person name="Kwitek A.E."/>
            <person name="Lazar J."/>
            <person name="Pasko D."/>
            <person name="Tonellato P.J."/>
            <person name="Twigger S."/>
            <person name="Ponting C.P."/>
            <person name="Duarte J.M."/>
            <person name="Rice S."/>
            <person name="Goodstadt L."/>
            <person name="Beatson S.A."/>
            <person name="Emes R.D."/>
            <person name="Winter E.E."/>
            <person name="Webber C."/>
            <person name="Brandt P."/>
            <person name="Nyakatura G."/>
            <person name="Adetobi M."/>
            <person name="Chiaromonte F."/>
            <person name="Elnitski L."/>
            <person name="Eswara P."/>
            <person name="Hardison R.C."/>
            <person name="Hou M."/>
            <person name="Kolbe D."/>
            <person name="Makova K."/>
            <person name="Miller W."/>
            <person name="Nekrutenko A."/>
            <person name="Riemer C."/>
            <person name="Schwartz S."/>
            <person name="Taylor J."/>
            <person name="Yang S."/>
            <person name="Zhang Y."/>
            <person name="Lindpaintner K."/>
            <person name="Andrews T.D."/>
            <person name="Caccamo M."/>
            <person name="Clamp M."/>
            <person name="Clarke L."/>
            <person name="Curwen V."/>
            <person name="Durbin R.M."/>
            <person name="Eyras E."/>
            <person name="Searle S.M."/>
            <person name="Cooper G.M."/>
            <person name="Batzoglou S."/>
            <person name="Brudno M."/>
            <person name="Sidow A."/>
            <person name="Stone E.A."/>
            <person name="Payseur B.A."/>
            <person name="Bourque G."/>
            <person name="Lopez-Otin C."/>
            <person name="Puente X.S."/>
            <person name="Chakrabarti K."/>
            <person name="Chatterji S."/>
            <person name="Dewey C."/>
            <person name="Pachter L."/>
            <person name="Bray N."/>
            <person name="Yap V.B."/>
            <person name="Caspi A."/>
            <person name="Tesler G."/>
            <person name="Pevzner P.A."/>
            <person name="Haussler D."/>
            <person name="Roskin K.M."/>
            <person name="Baertsch R."/>
            <person name="Clawson H."/>
            <person name="Furey T.S."/>
            <person name="Hinrichs A.S."/>
            <person name="Karolchik D."/>
            <person name="Kent W.J."/>
            <person name="Rosenbloom K.R."/>
            <person name="Trumbower H."/>
            <person name="Weirauch M."/>
            <person name="Cooper D.N."/>
            <person name="Stenson P.D."/>
            <person name="Ma B."/>
            <person name="Brent M."/>
            <person name="Arumugam M."/>
            <person name="Shteynberg D."/>
            <person name="Copley R.R."/>
            <person name="Taylor M.S."/>
            <person name="Riethman H."/>
            <person name="Mudunuri U."/>
            <person name="Peterson J."/>
            <person name="Guyer M."/>
            <person name="Felsenfeld A."/>
            <person name="Old S."/>
            <person name="Mockrin S."/>
            <person name="Collins F.S."/>
        </authorList>
    </citation>
    <scope>NUCLEOTIDE SEQUENCE [LARGE SCALE GENOMIC DNA]</scope>
    <scope>IDENTIFICATION</scope>
    <source>
        <strain>Brown Norway</strain>
    </source>
</reference>
<reference key="3">
    <citation type="journal article" date="2001" name="Biochemistry">
        <title>A novel calcium-regulated membrane guanylate cyclase transduction system in the olfactory neuroepithelium.</title>
        <authorList>
            <person name="Duda T."/>
            <person name="Jankowska A."/>
            <person name="Venkataraman V."/>
            <person name="Nagele R.G."/>
            <person name="Sharma R.K."/>
        </authorList>
    </citation>
    <scope>CATALYTIC ACTIVITY</scope>
    <scope>FUNCTION</scope>
    <scope>SUBCELLULAR LOCATION</scope>
    <scope>ACTIVITY REGULATION</scope>
    <scope>TISSUE SPECIFICITY</scope>
    <scope>BIOPHYSICOCHEMICAL PROPERTIES</scope>
</reference>
<reference key="4">
    <citation type="journal article" date="2008" name="Biochem. Biophys. Res. Commun.">
        <title>ONE-GC membrane guanylate cyclase, a trimodal odorant signal transducer.</title>
        <authorList>
            <person name="Duda T."/>
            <person name="Sharma R.K."/>
        </authorList>
    </citation>
    <scope>CATALYTIC ACTIVITY</scope>
    <scope>FUNCTION</scope>
    <scope>INTERACTION WITH NCALD</scope>
    <scope>LIGAND-BINDING</scope>
</reference>
<comment type="function">
    <text evidence="2 8">Functions as an olfactory receptor activated by a urine odorant, uroguanylin (PubMed:18178149). Activated as well by the volatile semiochemicals carbon disulfide (CS2) and carbon dioxide (CO2) (By similarity). Has guanylate cyclase activity upon binding of the ligand (PubMed:18178149). Activation of GUCY2D neurons leads to the cGMP-dependent activation of the CNGA3 channels, membrane depolarization and an increase in action potential frequency. Signaling pathways activated by GUCY2D may trigger social behaviors such as acquisition of food preference (By similarity).</text>
</comment>
<comment type="catalytic activity">
    <reaction evidence="7 8">
        <text>GTP = 3',5'-cyclic GMP + diphosphate</text>
        <dbReference type="Rhea" id="RHEA:13665"/>
        <dbReference type="ChEBI" id="CHEBI:33019"/>
        <dbReference type="ChEBI" id="CHEBI:37565"/>
        <dbReference type="ChEBI" id="CHEBI:57746"/>
        <dbReference type="EC" id="4.6.1.2"/>
    </reaction>
</comment>
<comment type="activity regulation">
    <text evidence="7">Activated by Ca(2+) (PubMed:11580282). Activated by NCALD in a Ca(2+)-dependent fashion (PubMed:11580282).</text>
</comment>
<comment type="biophysicochemical properties">
    <kinetics>
        <KM evidence="7">71 uM for GTP</KM>
    </kinetics>
</comment>
<comment type="subunit">
    <text evidence="8">Interacts (via the catalytic domain) with NCALD.</text>
</comment>
<comment type="subcellular location">
    <subcellularLocation>
        <location evidence="7">Cell projection</location>
        <location evidence="7">Cilium membrane</location>
        <topology evidence="8">Single-pass type I membrane protein</topology>
    </subcellularLocation>
    <text evidence="2 7">Colocalized with NCALD at the apical region of the cilia (PubMed:11580282). Coexpresses with PDE2 (By similarity).</text>
</comment>
<comment type="tissue specificity">
    <text evidence="7 9">Specifically expressed in a subpopulation of olfactory sensory neurons (PubMed:7724600). Expressed in the cilia of the olfactory epithelium (PubMed:11580282).</text>
</comment>
<comment type="domain">
    <text evidence="12">The protein kinase domain is predicted to be catalytically inactive.</text>
</comment>
<comment type="miscellaneous">
    <text evidence="8">In contrast to mouse, guanylin, a urine odorant, does not stimulate GUCY2D.</text>
</comment>
<comment type="similarity">
    <text evidence="4">Belongs to the adenylyl cyclase class-4/guanylyl cyclase family.</text>
</comment>
<comment type="caution">
    <text evidence="12">The nomenclature for members of the GUCY2 gene family is not consistent across species. In mice the GUCY2D gene encodes the protein guanylate cyclase 2D specifically expressed in a subpopulation of olfactory sensory neurons. In rat the official name is GUCY2E for guanylate cyclase 2D. In human this gene is a pseudogene.</text>
</comment>
<sequence>MAGLQQGCHPEGQDWTAPHWKTCRPCQGPRGLTVRHLRTVSSISVFSVVFWGVLLWADSLSLPAWARETFTLGVLGPWDCDPIFAQALPSMATQLAVDRVNQDASLLLGSQLDFKILPTGCDTPHALATFVAHRNTVAAFIGPVNPGYCPAAALLAQGWGKSLFSWACGAPEGGGALVPTLPSMADVLLSVMRHFGWARLAIVSSHQDIWVTTAQQLATAFRAHGLPIGLITSLGPGEKGATEVCKQLHSVHGLKIVVLCMHSALLGGLEQTVLLRCARKEGLTDGRLVFLPYDTLLFALPYRNRSYLVLDDDGPLQEAYDAVLTISLDTSPESHAFTATKMRGGTAANLGPEQVSPLFGTIYDAVILLAHALNHSEAHGTGLSGAHLGNHIRALDVAGFSQRIRIDGKGRRLPQYVILDTNGEGSQLVPTHILDVSTQQVQPLGTAVHFPGGSPPARDASCWFDPNTLCIRGVQPLGSLLTLTITCVLALVGGFLAYFIRLGLQQLRLLRGPHRILLTPQELTFLQRTPSRRRPHVDSGSESRSVVDGGSPQSVIQGSTRSVPAFLEHTNVALYQGEWVWLKKFEAGTAPDLRPSSLSLLRKMREMRHENVTAFLGLFVGPEVSAMVLEHCARGSLEDLLRNEDLRLDWTFKASLLLDLIRGLRYLHHRHFPHGRLKSRNCVVDTRFVLKITDHGYAEFLESHCSFRPQPAPEELLWTAPELLRGPRRPWGPGKATFKGDVFSLGIILQEVLTRDPPYCSWGLSAEEIIRKVASPPPLCRPLVSPDQGPLECIQLMQLCWEEAPDDRPSLDQIYTQFKSINQGKKTSVADSMLRMLEKYSQSLEGLVQERTEELELERRKTERLLSQMLPPSVAHALKMGTTVEPEYFDQVTIYFSDIVGFTTISALSEPIEVVGFLNDLYTMFDAVLDSHDVYKVETIGDAYMVASGLPRRNGNRHAAEIANMALEILSYAGNFRMRHAPDVPIRVRAGLHSGPCVAGVVGLTMPRYCLFGDTVNTASRMESTGLPYRIHVSRNTVQALLSLDEGYKIDVRGQTELKGKGLEETYWLTGKTGFCRSLPTPLSIQPGDPWQDHINQEIRTGFAKLARVG</sequence>
<name>GUC2D_RAT</name>
<organism>
    <name type="scientific">Rattus norvegicus</name>
    <name type="common">Rat</name>
    <dbReference type="NCBI Taxonomy" id="10116"/>
    <lineage>
        <taxon>Eukaryota</taxon>
        <taxon>Metazoa</taxon>
        <taxon>Chordata</taxon>
        <taxon>Craniata</taxon>
        <taxon>Vertebrata</taxon>
        <taxon>Euteleostomi</taxon>
        <taxon>Mammalia</taxon>
        <taxon>Eutheria</taxon>
        <taxon>Euarchontoglires</taxon>
        <taxon>Glires</taxon>
        <taxon>Rodentia</taxon>
        <taxon>Myomorpha</taxon>
        <taxon>Muroidea</taxon>
        <taxon>Muridae</taxon>
        <taxon>Murinae</taxon>
        <taxon>Rattus</taxon>
    </lineage>
</organism>
<feature type="signal peptide" evidence="3">
    <location>
        <begin position="1"/>
        <end position="66"/>
    </location>
</feature>
<feature type="chain" id="PRO_0000012382" description="Guanylate cyclase 2D">
    <location>
        <begin position="67"/>
        <end position="1110"/>
    </location>
</feature>
<feature type="topological domain" description="Extracellular" evidence="3">
    <location>
        <begin position="67"/>
        <end position="475"/>
    </location>
</feature>
<feature type="transmembrane region" description="Helical" evidence="3">
    <location>
        <begin position="476"/>
        <end position="500"/>
    </location>
</feature>
<feature type="topological domain" description="Cytoplasmic" evidence="3">
    <location>
        <begin position="501"/>
        <end position="1110"/>
    </location>
</feature>
<feature type="domain" description="Protein kinase" evidence="5">
    <location>
        <begin position="541"/>
        <end position="818"/>
    </location>
</feature>
<feature type="domain" description="Guanylate cyclase" evidence="4">
    <location>
        <begin position="893"/>
        <end position="1023"/>
    </location>
</feature>
<feature type="region of interest" description="Disordered" evidence="6">
    <location>
        <begin position="529"/>
        <end position="556"/>
    </location>
</feature>
<feature type="region of interest" description="Interaction with NCALD" evidence="8">
    <location>
        <begin position="880"/>
        <end position="921"/>
    </location>
</feature>
<feature type="glycosylation site" description="N-linked (GlcNAc...) asparagine" evidence="3">
    <location>
        <position position="304"/>
    </location>
</feature>
<feature type="glycosylation site" description="N-linked (GlcNAc...) asparagine" evidence="3">
    <location>
        <position position="374"/>
    </location>
</feature>
<feature type="disulfide bond" evidence="1">
    <location>
        <begin position="121"/>
        <end position="149"/>
    </location>
</feature>
<feature type="disulfide bond" description="Interchain" evidence="1">
    <location>
        <position position="462"/>
    </location>
</feature>
<feature type="disulfide bond" description="Interchain" evidence="1">
    <location>
        <position position="470"/>
    </location>
</feature>
<feature type="sequence conflict" description="In Ref. 1; AAC42057." ref="1">
    <original>PCQ</original>
    <variation>ALP</variation>
    <location>
        <begin position="25"/>
        <end position="27"/>
    </location>
</feature>
<feature type="sequence conflict" description="In Ref. 1; AAC42057." ref="1">
    <original>K</original>
    <variation>E</variation>
    <location>
        <position position="280"/>
    </location>
</feature>
<feature type="sequence conflict" description="In Ref. 1; AAC42057." ref="1">
    <original>T</original>
    <variation>A</variation>
    <location>
        <position position="346"/>
    </location>
</feature>
<feature type="sequence conflict" description="In Ref. 1; AAC42057." ref="1">
    <original>A</original>
    <variation>T</variation>
    <location>
        <position position="378"/>
    </location>
</feature>
<feature type="sequence conflict" description="In Ref. 1; AAC42057." ref="1">
    <original>R</original>
    <variation>H</variation>
    <location>
        <position position="458"/>
    </location>
</feature>
<feature type="sequence conflict" description="In Ref. 1; AAC42057." ref="1">
    <original>R</original>
    <variation>G</variation>
    <location>
        <position position="729"/>
    </location>
</feature>
<feature type="sequence conflict" description="In Ref. 1; AAC42057." ref="1">
    <original>G</original>
    <variation>C</variation>
    <location>
        <position position="1110"/>
    </location>
</feature>
<accession>P51839</accession>
<accession>F1M245</accession>